<protein>
    <recommendedName>
        <fullName>Viral late gene transcription factor 3</fullName>
        <shortName>VLTF-3</shortName>
    </recommendedName>
    <alternativeName>
        <fullName>Trans-activator protein A2</fullName>
    </alternativeName>
</protein>
<reference key="1">
    <citation type="journal article" date="1990" name="Virology">
        <title>The complete DNA sequence of vaccinia virus.</title>
        <authorList>
            <person name="Goebel S.J."/>
            <person name="Johnson G.P."/>
            <person name="Perkus M.E."/>
            <person name="Davis S.W."/>
            <person name="Winslow J.P."/>
            <person name="Paoletti E."/>
        </authorList>
    </citation>
    <scope>NUCLEOTIDE SEQUENCE [LARGE SCALE GENOMIC DNA]</scope>
</reference>
<reference key="2">
    <citation type="journal article" date="1990" name="Virology">
        <title>Appendix to 'The complete DNA sequence of vaccinia virus'.</title>
        <authorList>
            <person name="Goebel S.J."/>
            <person name="Johnson G.P."/>
            <person name="Perkus M.E."/>
            <person name="Davis S.W."/>
            <person name="Winslow J.P."/>
            <person name="Paoletti E."/>
        </authorList>
    </citation>
    <scope>NUCLEOTIDE SEQUENCE [LARGE SCALE GENOMIC DNA]</scope>
</reference>
<name>VLTF3_VACCC</name>
<accession>P68318</accession>
<accession>P07609</accession>
<sequence>MNLRLCSGCRHNGIVSEQGYEYCIFCESVFQKCTKVQKKSNFHVSNKLIHLRNVLRRLLSHQCSGEIISELLDIMEKNQISTDDVDANFVSSFLKANERINKKDYKLVFEIINQVKDEKLNLSTEKINEVVEIFKHLVFFCQENTPSKTINYSFFLDKIFDITSVTKNLKPQTVKNYTKNNSNQLVWENFLAHMRSKKRVTMVEDYGHEYVFVDERFSTCSLEV</sequence>
<gene>
    <name type="primary">OPG127</name>
    <name type="synonym">VLTF3</name>
    <name type="ORF">A2L</name>
</gene>
<dbReference type="EMBL" id="M35027">
    <property type="protein sequence ID" value="AAA48117.1"/>
    <property type="molecule type" value="Genomic_DNA"/>
</dbReference>
<dbReference type="PIR" id="B23768">
    <property type="entry name" value="WMVZR1"/>
</dbReference>
<dbReference type="SMR" id="P68318"/>
<dbReference type="IntAct" id="P68318">
    <property type="interactions" value="4"/>
</dbReference>
<dbReference type="MINT" id="P68318"/>
<dbReference type="Proteomes" id="UP000008269">
    <property type="component" value="Segment"/>
</dbReference>
<dbReference type="GO" id="GO:0008270">
    <property type="term" value="F:zinc ion binding"/>
    <property type="evidence" value="ECO:0007669"/>
    <property type="project" value="UniProtKB-KW"/>
</dbReference>
<dbReference type="GO" id="GO:0046782">
    <property type="term" value="P:regulation of viral transcription"/>
    <property type="evidence" value="ECO:0007669"/>
    <property type="project" value="InterPro"/>
</dbReference>
<dbReference type="InterPro" id="IPR007031">
    <property type="entry name" value="Poxvirus_VLTF3"/>
</dbReference>
<dbReference type="InterPro" id="IPR014900">
    <property type="entry name" value="VLTF-3_Zn_ribbon"/>
</dbReference>
<dbReference type="Pfam" id="PF08792">
    <property type="entry name" value="A2L_zn_ribbon"/>
    <property type="match status" value="1"/>
</dbReference>
<dbReference type="Pfam" id="PF04947">
    <property type="entry name" value="Pox_VLTF3"/>
    <property type="match status" value="1"/>
</dbReference>
<keyword id="KW-0010">Activator</keyword>
<keyword id="KW-0426">Late protein</keyword>
<keyword id="KW-0479">Metal-binding</keyword>
<keyword id="KW-1185">Reference proteome</keyword>
<keyword id="KW-0804">Transcription</keyword>
<keyword id="KW-0805">Transcription regulation</keyword>
<keyword id="KW-0862">Zinc</keyword>
<keyword id="KW-0863">Zinc-finger</keyword>
<proteinExistence type="evidence at protein level"/>
<organism>
    <name type="scientific">Vaccinia virus (strain Copenhagen)</name>
    <name type="common">VACV</name>
    <dbReference type="NCBI Taxonomy" id="10249"/>
    <lineage>
        <taxon>Viruses</taxon>
        <taxon>Varidnaviria</taxon>
        <taxon>Bamfordvirae</taxon>
        <taxon>Nucleocytoviricota</taxon>
        <taxon>Pokkesviricetes</taxon>
        <taxon>Chitovirales</taxon>
        <taxon>Poxviridae</taxon>
        <taxon>Chordopoxvirinae</taxon>
        <taxon>Orthopoxvirus</taxon>
        <taxon>Vaccinia virus</taxon>
    </lineage>
</organism>
<organismHost>
    <name type="scientific">Homo sapiens</name>
    <name type="common">Human</name>
    <dbReference type="NCBI Taxonomy" id="9606"/>
</organismHost>
<evidence type="ECO:0000250" key="1"/>
<evidence type="ECO:0000250" key="2">
    <source>
        <dbReference type="UniProtKB" id="P68319"/>
    </source>
</evidence>
<evidence type="ECO:0000305" key="3"/>
<comment type="function">
    <text evidence="2">Acts with RNA polymerase to initiate transcription from late gene promoters.</text>
</comment>
<comment type="subunit">
    <text evidence="2">Interacts with the late transcription elongation factor VLTF-4/OPG110. Interacts with the late transcription factors VLTF-1/OPG093.</text>
</comment>
<comment type="interaction">
    <interactant intactId="EBI-7366338">
        <id>P68318</id>
    </interactant>
    <interactant intactId="EBI-7273218">
        <id>P68613</id>
        <label>OPG093</label>
    </interactant>
    <organismsDiffer>true</organismsDiffer>
    <experiments>3</experiments>
</comment>
<comment type="interaction">
    <interactant intactId="EBI-7366338">
        <id>P68318</id>
    </interactant>
    <interactant intactId="EBI-7272435">
        <id>P07242</id>
        <label>OPG110</label>
    </interactant>
    <organismsDiffer>true</organismsDiffer>
    <experiments>2</experiments>
</comment>
<comment type="interaction">
    <interactant intactId="EBI-7366338">
        <id>P68318</id>
    </interactant>
    <interactant intactId="EBI-2949699">
        <id>P98179</id>
        <label>RBM3</label>
    </interactant>
    <organismsDiffer>true</organismsDiffer>
    <experiments>2</experiments>
</comment>
<comment type="developmental stage">
    <text>Intermediate stages of infection.</text>
</comment>
<comment type="similarity">
    <text evidence="3">Belongs to the orthopoxvirus VLTF-3/OPG127 family.</text>
</comment>
<feature type="chain" id="PRO_0000099176" description="Viral late gene transcription factor 3">
    <location>
        <begin position="1"/>
        <end position="224"/>
    </location>
</feature>
<feature type="zinc finger region" evidence="1">
    <location>
        <begin position="6"/>
        <end position="26"/>
    </location>
</feature>